<feature type="chain" id="PRO_0000289184" description="Mitochondrial fission factor">
    <location>
        <begin position="1"/>
        <end position="342"/>
    </location>
</feature>
<feature type="topological domain" description="Cytoplasmic" evidence="3">
    <location>
        <begin position="1"/>
        <end position="322"/>
    </location>
</feature>
<feature type="transmembrane region" description="Helical; Anchor for type IV membrane protein" evidence="3">
    <location>
        <begin position="323"/>
        <end position="340"/>
    </location>
</feature>
<feature type="topological domain" description="Mitochondrial intermembrane" evidence="3">
    <location>
        <begin position="341"/>
        <end position="342"/>
    </location>
</feature>
<feature type="coiled-coil region" evidence="3">
    <location>
        <begin position="291"/>
        <end position="322"/>
    </location>
</feature>
<feature type="modified residue" description="Phosphothreonine" evidence="16">
    <location>
        <position position="115"/>
    </location>
</feature>
<feature type="modified residue" description="Phosphoserine" evidence="14 16 17">
    <location>
        <position position="155"/>
    </location>
</feature>
<feature type="modified residue" description="Phosphoserine" evidence="14 16 17 18">
    <location>
        <position position="157"/>
    </location>
</feature>
<feature type="modified residue" description="Phosphoserine" evidence="2">
    <location>
        <position position="172"/>
    </location>
</feature>
<feature type="modified residue" description="Phosphothreonine" evidence="16">
    <location>
        <position position="200"/>
    </location>
</feature>
<feature type="modified residue" description="Phosphoserine" evidence="16">
    <location>
        <position position="202"/>
    </location>
</feature>
<feature type="modified residue" description="Phosphoserine" evidence="16">
    <location>
        <position position="229"/>
    </location>
</feature>
<feature type="modified residue" description="Phosphoserine" evidence="16 18">
    <location>
        <position position="233"/>
    </location>
</feature>
<feature type="modified residue" description="Phosphoserine" evidence="2">
    <location>
        <position position="295"/>
    </location>
</feature>
<feature type="splice variant" id="VSP_025954" description="In isoform 2, isoform 3, isoform 4 and isoform 5." evidence="10 11 12">
    <location>
        <begin position="1"/>
        <end position="26"/>
    </location>
</feature>
<feature type="splice variant" id="VSP_025955" description="In isoform 4." evidence="12">
    <location>
        <begin position="174"/>
        <end position="271"/>
    </location>
</feature>
<feature type="splice variant" id="VSP_025956" description="In isoform 5." evidence="11">
    <location>
        <begin position="174"/>
        <end position="251"/>
    </location>
</feature>
<feature type="splice variant" id="VSP_025957" description="In isoform 2." evidence="10">
    <location>
        <begin position="174"/>
        <end position="198"/>
    </location>
</feature>
<feature type="splice variant" id="VSP_025958" description="In isoform 3." evidence="11">
    <location>
        <begin position="199"/>
        <end position="271"/>
    </location>
</feature>
<feature type="sequence variant" id="VAR_053915" description="In dbSNP:rs3211097.">
    <original>S</original>
    <variation>C</variation>
    <location>
        <position position="7"/>
    </location>
</feature>
<feature type="sequence variant" id="VAR_053916" description="In dbSNP:rs3211098.">
    <original>S</original>
    <variation>I</variation>
    <location>
        <position position="7"/>
    </location>
</feature>
<feature type="sequence variant" id="VAR_036028" description="In a colorectal cancer sample; somatic mutation." evidence="4">
    <original>E</original>
    <variation>K</variation>
    <location>
        <position position="29"/>
    </location>
</feature>
<feature type="sequence conflict" description="In Ref. 7; CAH56328." evidence="13" ref="7">
    <original>H</original>
    <variation>Y</variation>
    <location>
        <position position="212"/>
    </location>
</feature>
<feature type="modified residue" description="Phosphoserine" evidence="19">
    <location sequence="Q9GZY8-2">
        <position position="146"/>
    </location>
</feature>
<feature type="modified residue" description="Phosphothreonine" evidence="15 16">
    <location sequence="Q9GZY8-2">
        <position position="149"/>
    </location>
</feature>
<feature type="modified residue" description="Phosphoserine" evidence="15 16">
    <location sequence="Q9GZY8-2">
        <position position="151"/>
    </location>
</feature>
<feature type="modified residue" description="Phosphoserine" evidence="16">
    <location sequence="Q9GZY8-5">
        <position position="146"/>
    </location>
</feature>
<organism>
    <name type="scientific">Homo sapiens</name>
    <name type="common">Human</name>
    <dbReference type="NCBI Taxonomy" id="9606"/>
    <lineage>
        <taxon>Eukaryota</taxon>
        <taxon>Metazoa</taxon>
        <taxon>Chordata</taxon>
        <taxon>Craniata</taxon>
        <taxon>Vertebrata</taxon>
        <taxon>Euteleostomi</taxon>
        <taxon>Mammalia</taxon>
        <taxon>Eutheria</taxon>
        <taxon>Euarchontoglires</taxon>
        <taxon>Primates</taxon>
        <taxon>Haplorrhini</taxon>
        <taxon>Catarrhini</taxon>
        <taxon>Hominidae</taxon>
        <taxon>Homo</taxon>
    </lineage>
</organism>
<accession>Q9GZY8</accession>
<accession>Q567U1</accession>
<accession>Q658R6</accession>
<accession>Q9BVZ1</accession>
<accession>Q9H690</accession>
<accession>Q9NRG8</accession>
<dbReference type="EMBL" id="AK026137">
    <property type="protein sequence ID" value="BAB15373.1"/>
    <property type="molecule type" value="mRNA"/>
</dbReference>
<dbReference type="EMBL" id="AF246239">
    <property type="protein sequence ID" value="AAG44486.1"/>
    <property type="molecule type" value="mRNA"/>
</dbReference>
<dbReference type="EMBL" id="AF226049">
    <property type="protein sequence ID" value="AAF86949.1"/>
    <property type="molecule type" value="mRNA"/>
</dbReference>
<dbReference type="EMBL" id="AF258660">
    <property type="protein sequence ID" value="AAG44658.1"/>
    <property type="molecule type" value="mRNA"/>
</dbReference>
<dbReference type="EMBL" id="AC097662">
    <property type="protein sequence ID" value="AAY24252.1"/>
    <property type="molecule type" value="Genomic_DNA"/>
</dbReference>
<dbReference type="EMBL" id="BC000797">
    <property type="protein sequence ID" value="AAH00797.1"/>
    <property type="molecule type" value="mRNA"/>
</dbReference>
<dbReference type="EMBL" id="BC093024">
    <property type="protein sequence ID" value="AAH93024.1"/>
    <property type="molecule type" value="mRNA"/>
</dbReference>
<dbReference type="EMBL" id="AL833032">
    <property type="protein sequence ID" value="CAH56328.1"/>
    <property type="molecule type" value="mRNA"/>
</dbReference>
<dbReference type="CCDS" id="CCDS2465.1">
    <molecule id="Q9GZY8-1"/>
</dbReference>
<dbReference type="CCDS" id="CCDS63139.1">
    <molecule id="Q9GZY8-3"/>
</dbReference>
<dbReference type="CCDS" id="CCDS63140.1">
    <molecule id="Q9GZY8-2"/>
</dbReference>
<dbReference type="CCDS" id="CCDS63141.1">
    <molecule id="Q9GZY8-5"/>
</dbReference>
<dbReference type="CCDS" id="CCDS63142.1">
    <molecule id="Q9GZY8-4"/>
</dbReference>
<dbReference type="RefSeq" id="NP_001263990.1">
    <molecule id="Q9GZY8-1"/>
    <property type="nucleotide sequence ID" value="NM_001277061.2"/>
</dbReference>
<dbReference type="RefSeq" id="NP_001263991.1">
    <molecule id="Q9GZY8-2"/>
    <property type="nucleotide sequence ID" value="NM_001277062.2"/>
</dbReference>
<dbReference type="RefSeq" id="NP_001263992.1">
    <molecule id="Q9GZY8-3"/>
    <property type="nucleotide sequence ID" value="NM_001277063.2"/>
</dbReference>
<dbReference type="RefSeq" id="NP_001263993.1">
    <molecule id="Q9GZY8-5"/>
    <property type="nucleotide sequence ID" value="NM_001277064.2"/>
</dbReference>
<dbReference type="RefSeq" id="NP_001263994.1">
    <molecule id="Q9GZY8-4"/>
    <property type="nucleotide sequence ID" value="NM_001277065.2"/>
</dbReference>
<dbReference type="RefSeq" id="NP_001263995.1">
    <molecule id="Q9GZY8-4"/>
    <property type="nucleotide sequence ID" value="NM_001277066.2"/>
</dbReference>
<dbReference type="RefSeq" id="NP_001263996.1">
    <property type="nucleotide sequence ID" value="NM_001277067.1"/>
</dbReference>
<dbReference type="RefSeq" id="NP_001263997.1">
    <property type="nucleotide sequence ID" value="NM_001277068.1"/>
</dbReference>
<dbReference type="RefSeq" id="NP_064579.3">
    <molecule id="Q9GZY8-1"/>
    <property type="nucleotide sequence ID" value="NM_020194.5"/>
</dbReference>
<dbReference type="RefSeq" id="XP_006712701.1">
    <property type="nucleotide sequence ID" value="XM_006712638.1"/>
</dbReference>
<dbReference type="RefSeq" id="XP_006712702.1">
    <property type="nucleotide sequence ID" value="XM_006712639.2"/>
</dbReference>
<dbReference type="RefSeq" id="XP_011509802.1">
    <molecule id="Q9GZY8-1"/>
    <property type="nucleotide sequence ID" value="XM_011511500.2"/>
</dbReference>
<dbReference type="RefSeq" id="XP_016860004.1">
    <property type="nucleotide sequence ID" value="XM_017004515.1"/>
</dbReference>
<dbReference type="RefSeq" id="XP_054199027.1">
    <molecule id="Q9GZY8-1"/>
    <property type="nucleotide sequence ID" value="XM_054343052.1"/>
</dbReference>
<dbReference type="SMR" id="Q9GZY8"/>
<dbReference type="BioGRID" id="121271">
    <property type="interactions" value="186"/>
</dbReference>
<dbReference type="FunCoup" id="Q9GZY8">
    <property type="interactions" value="1994"/>
</dbReference>
<dbReference type="IntAct" id="Q9GZY8">
    <property type="interactions" value="126"/>
</dbReference>
<dbReference type="MINT" id="Q9GZY8"/>
<dbReference type="STRING" id="9606.ENSP00000302037"/>
<dbReference type="GlyCosmos" id="Q9GZY8">
    <property type="glycosylation" value="1 site, 1 glycan"/>
</dbReference>
<dbReference type="GlyGen" id="Q9GZY8">
    <property type="glycosylation" value="4 sites, 1 O-linked glycan (4 sites)"/>
</dbReference>
<dbReference type="iPTMnet" id="Q9GZY8"/>
<dbReference type="PhosphoSitePlus" id="Q9GZY8"/>
<dbReference type="BioMuta" id="MFF"/>
<dbReference type="DMDM" id="74725008"/>
<dbReference type="jPOST" id="Q9GZY8"/>
<dbReference type="MassIVE" id="Q9GZY8"/>
<dbReference type="PaxDb" id="9606-ENSP00000302037"/>
<dbReference type="PeptideAtlas" id="Q9GZY8"/>
<dbReference type="ProteomicsDB" id="80176">
    <molecule id="Q9GZY8-1"/>
</dbReference>
<dbReference type="ProteomicsDB" id="80177">
    <molecule id="Q9GZY8-2"/>
</dbReference>
<dbReference type="ProteomicsDB" id="80178">
    <molecule id="Q9GZY8-3"/>
</dbReference>
<dbReference type="ProteomicsDB" id="80179">
    <molecule id="Q9GZY8-4"/>
</dbReference>
<dbReference type="ProteomicsDB" id="80180">
    <molecule id="Q9GZY8-5"/>
</dbReference>
<dbReference type="Pumba" id="Q9GZY8"/>
<dbReference type="TopDownProteomics" id="Q9GZY8-2">
    <molecule id="Q9GZY8-2"/>
</dbReference>
<dbReference type="ABCD" id="Q9GZY8">
    <property type="antibodies" value="2 sequenced antibodies"/>
</dbReference>
<dbReference type="Antibodypedia" id="2600">
    <property type="antibodies" value="223 antibodies from 32 providers"/>
</dbReference>
<dbReference type="DNASU" id="56947"/>
<dbReference type="Ensembl" id="ENST00000304593.14">
    <molecule id="Q9GZY8-2"/>
    <property type="protein sequence ID" value="ENSP00000304898.10"/>
    <property type="gene ID" value="ENSG00000168958.21"/>
</dbReference>
<dbReference type="Ensembl" id="ENST00000337110.11">
    <molecule id="Q9GZY8-3"/>
    <property type="protein sequence ID" value="ENSP00000338412.7"/>
    <property type="gene ID" value="ENSG00000168958.21"/>
</dbReference>
<dbReference type="Ensembl" id="ENST00000349901.11">
    <molecule id="Q9GZY8-5"/>
    <property type="protein sequence ID" value="ENSP00000304134.9"/>
    <property type="gene ID" value="ENSG00000168958.21"/>
</dbReference>
<dbReference type="Ensembl" id="ENST00000353339.8">
    <molecule id="Q9GZY8-1"/>
    <property type="protein sequence ID" value="ENSP00000302037.4"/>
    <property type="gene ID" value="ENSG00000168958.21"/>
</dbReference>
<dbReference type="Ensembl" id="ENST00000354503.10">
    <molecule id="Q9GZY8-4"/>
    <property type="protein sequence ID" value="ENSP00000346498.6"/>
    <property type="gene ID" value="ENSG00000168958.21"/>
</dbReference>
<dbReference type="Ensembl" id="ENST00000409565.5">
    <molecule id="Q9GZY8-4"/>
    <property type="protein sequence ID" value="ENSP00000386964.1"/>
    <property type="gene ID" value="ENSG00000168958.21"/>
</dbReference>
<dbReference type="GeneID" id="56947"/>
<dbReference type="KEGG" id="hsa:56947"/>
<dbReference type="MANE-Select" id="ENST00000304593.14">
    <molecule id="Q9GZY8-2"/>
    <property type="protein sequence ID" value="ENSP00000304898.10"/>
    <property type="RefSeq nucleotide sequence ID" value="NM_001277062.2"/>
    <property type="RefSeq protein sequence ID" value="NP_001263991.1"/>
</dbReference>
<dbReference type="UCSC" id="uc002vos.5">
    <molecule id="Q9GZY8-1"/>
    <property type="organism name" value="human"/>
</dbReference>
<dbReference type="AGR" id="HGNC:24858"/>
<dbReference type="CTD" id="56947"/>
<dbReference type="DisGeNET" id="56947"/>
<dbReference type="GeneCards" id="MFF"/>
<dbReference type="HGNC" id="HGNC:24858">
    <property type="gene designation" value="MFF"/>
</dbReference>
<dbReference type="HPA" id="ENSG00000168958">
    <property type="expression patterns" value="Low tissue specificity"/>
</dbReference>
<dbReference type="MalaCards" id="MFF"/>
<dbReference type="MIM" id="614785">
    <property type="type" value="gene"/>
</dbReference>
<dbReference type="MIM" id="617086">
    <property type="type" value="phenotype"/>
</dbReference>
<dbReference type="neXtProt" id="NX_Q9GZY8"/>
<dbReference type="OpenTargets" id="ENSG00000168958"/>
<dbReference type="Orphanet" id="485421">
    <property type="disease" value="MFF-related encephalopathy due to mitochondrial and peroxisomal fission defect"/>
</dbReference>
<dbReference type="PharmGKB" id="PA162395839"/>
<dbReference type="VEuPathDB" id="HostDB:ENSG00000168958"/>
<dbReference type="eggNOG" id="ENOG502R96B">
    <property type="taxonomic scope" value="Eukaryota"/>
</dbReference>
<dbReference type="GeneTree" id="ENSGT00390000009776"/>
<dbReference type="InParanoid" id="Q9GZY8"/>
<dbReference type="OMA" id="ERIVVAX"/>
<dbReference type="OrthoDB" id="5986838at2759"/>
<dbReference type="PAN-GO" id="Q9GZY8">
    <property type="GO annotations" value="4 GO annotations based on evolutionary models"/>
</dbReference>
<dbReference type="PhylomeDB" id="Q9GZY8"/>
<dbReference type="TreeFam" id="TF325506"/>
<dbReference type="PathwayCommons" id="Q9GZY8"/>
<dbReference type="SignaLink" id="Q9GZY8"/>
<dbReference type="SIGNOR" id="Q9GZY8"/>
<dbReference type="BioGRID-ORCS" id="56947">
    <property type="hits" value="15 hits in 1157 CRISPR screens"/>
</dbReference>
<dbReference type="CD-CODE" id="FB4E32DD">
    <property type="entry name" value="Presynaptic clusters and postsynaptic densities"/>
</dbReference>
<dbReference type="ChiTaRS" id="MFF">
    <property type="organism name" value="human"/>
</dbReference>
<dbReference type="GeneWiki" id="Mitochondrial_fission_factor"/>
<dbReference type="GenomeRNAi" id="56947"/>
<dbReference type="Pharos" id="Q9GZY8">
    <property type="development level" value="Tbio"/>
</dbReference>
<dbReference type="PRO" id="PR:Q9GZY8"/>
<dbReference type="Proteomes" id="UP000005640">
    <property type="component" value="Chromosome 2"/>
</dbReference>
<dbReference type="RNAct" id="Q9GZY8">
    <property type="molecule type" value="protein"/>
</dbReference>
<dbReference type="Bgee" id="ENSG00000168958">
    <property type="expression patterns" value="Expressed in sperm and 206 other cell types or tissues"/>
</dbReference>
<dbReference type="ExpressionAtlas" id="Q9GZY8">
    <property type="expression patterns" value="baseline and differential"/>
</dbReference>
<dbReference type="GO" id="GO:0031966">
    <property type="term" value="C:mitochondrial membrane"/>
    <property type="evidence" value="ECO:0000314"/>
    <property type="project" value="UniProtKB"/>
</dbReference>
<dbReference type="GO" id="GO:0005741">
    <property type="term" value="C:mitochondrial outer membrane"/>
    <property type="evidence" value="ECO:0000314"/>
    <property type="project" value="UniProtKB"/>
</dbReference>
<dbReference type="GO" id="GO:0005739">
    <property type="term" value="C:mitochondrion"/>
    <property type="evidence" value="ECO:0000314"/>
    <property type="project" value="HPA"/>
</dbReference>
<dbReference type="GO" id="GO:0005777">
    <property type="term" value="C:peroxisome"/>
    <property type="evidence" value="ECO:0000314"/>
    <property type="project" value="UniProtKB"/>
</dbReference>
<dbReference type="GO" id="GO:0032991">
    <property type="term" value="C:protein-containing complex"/>
    <property type="evidence" value="ECO:0000314"/>
    <property type="project" value="UniProtKB"/>
</dbReference>
<dbReference type="GO" id="GO:0008021">
    <property type="term" value="C:synaptic vesicle"/>
    <property type="evidence" value="ECO:0007669"/>
    <property type="project" value="UniProtKB-SubCell"/>
</dbReference>
<dbReference type="GO" id="GO:0042802">
    <property type="term" value="F:identical protein binding"/>
    <property type="evidence" value="ECO:0000353"/>
    <property type="project" value="IntAct"/>
</dbReference>
<dbReference type="GO" id="GO:0042803">
    <property type="term" value="F:protein homodimerization activity"/>
    <property type="evidence" value="ECO:0000314"/>
    <property type="project" value="UniProtKB"/>
</dbReference>
<dbReference type="GO" id="GO:0000266">
    <property type="term" value="P:mitochondrial fission"/>
    <property type="evidence" value="ECO:0000314"/>
    <property type="project" value="UniProtKB"/>
</dbReference>
<dbReference type="GO" id="GO:0007005">
    <property type="term" value="P:mitochondrion organization"/>
    <property type="evidence" value="ECO:0000315"/>
    <property type="project" value="MGI"/>
</dbReference>
<dbReference type="GO" id="GO:0016559">
    <property type="term" value="P:peroxisome fission"/>
    <property type="evidence" value="ECO:0000315"/>
    <property type="project" value="UniProtKB"/>
</dbReference>
<dbReference type="GO" id="GO:0090141">
    <property type="term" value="P:positive regulation of mitochondrial fission"/>
    <property type="evidence" value="ECO:0000318"/>
    <property type="project" value="GO_Central"/>
</dbReference>
<dbReference type="GO" id="GO:0006626">
    <property type="term" value="P:protein targeting to mitochondrion"/>
    <property type="evidence" value="ECO:0000314"/>
    <property type="project" value="UniProtKB"/>
</dbReference>
<dbReference type="InterPro" id="IPR039433">
    <property type="entry name" value="Mff-like_dom"/>
</dbReference>
<dbReference type="InterPro" id="IPR008518">
    <property type="entry name" value="Mff/Tango-11"/>
</dbReference>
<dbReference type="PANTHER" id="PTHR16501:SF17">
    <property type="entry name" value="MITOCHONDRIAL FISSION FACTOR"/>
    <property type="match status" value="1"/>
</dbReference>
<dbReference type="PANTHER" id="PTHR16501">
    <property type="entry name" value="TRANSPORT AND GOLGI ORGANIZATION PROTEIN 11"/>
    <property type="match status" value="1"/>
</dbReference>
<dbReference type="Pfam" id="PF05644">
    <property type="entry name" value="Miff"/>
    <property type="match status" value="1"/>
</dbReference>
<comment type="function">
    <text evidence="1 5 6 8">Plays a role in mitochondrial and peroxisomal fission (PubMed:18353969, PubMed:23530241, PubMed:24196833). Promotes the recruitment and association of the fission mediator dynamin-related protein 1 (DNM1L) to the mitochondrial surface (PubMed:23530241). May be involved in regulation of synaptic vesicle membrane dynamics by recruitment of DNM1L to clathrin-containing vesicles (By similarity).</text>
</comment>
<comment type="subunit">
    <text evidence="2 6 8">Homodimer (PubMed:23530241). Interacts with DNM1L (PubMed:24196833). Interacts with C11orf65/MFI; the interaction inhibits MFF interaction with DNM1L (By similarity).</text>
</comment>
<comment type="interaction">
    <interactant intactId="EBI-11420856">
        <id>Q9GZY8</id>
    </interactant>
    <interactant intactId="EBI-724571">
        <id>O00429</id>
        <label>DNM1L</label>
    </interactant>
    <organismsDiffer>false</organismsDiffer>
    <experiments>3</experiments>
</comment>
<comment type="interaction">
    <interactant intactId="EBI-11420856">
        <id>Q9GZY8</id>
    </interactant>
    <interactant intactId="EBI-26953451">
        <id>P0DTF1</id>
    </interactant>
    <organismsDiffer>true</organismsDiffer>
    <experiments>3</experiments>
</comment>
<comment type="interaction">
    <interactant intactId="EBI-11956541">
        <id>Q9GZY8-5</id>
    </interactant>
    <interactant intactId="EBI-10827839">
        <id>Q15848</id>
        <label>ADIPOQ</label>
    </interactant>
    <organismsDiffer>false</organismsDiffer>
    <experiments>3</experiments>
</comment>
<comment type="interaction">
    <interactant intactId="EBI-11956541">
        <id>Q9GZY8-5</id>
    </interactant>
    <interactant intactId="EBI-1754287">
        <id>Q9NRZ5</id>
        <label>AGPAT4</label>
    </interactant>
    <organismsDiffer>false</organismsDiffer>
    <experiments>3</experiments>
</comment>
<comment type="interaction">
    <interactant intactId="EBI-11956541">
        <id>Q9GZY8-5</id>
    </interactant>
    <interactant intactId="EBI-11957045">
        <id>Q9NVV5-2</id>
        <label>AIG1</label>
    </interactant>
    <organismsDiffer>false</organismsDiffer>
    <experiments>6</experiments>
</comment>
<comment type="interaction">
    <interactant intactId="EBI-11956541">
        <id>Q9GZY8-5</id>
    </interactant>
    <interactant intactId="EBI-12109402">
        <id>Q86W74-2</id>
        <label>ANKRD46</label>
    </interactant>
    <organismsDiffer>false</organismsDiffer>
    <experiments>3</experiments>
</comment>
<comment type="interaction">
    <interactant intactId="EBI-11956541">
        <id>Q9GZY8-5</id>
    </interactant>
    <interactant intactId="EBI-715495">
        <id>P05090</id>
        <label>APOD</label>
    </interactant>
    <organismsDiffer>false</organismsDiffer>
    <experiments>3</experiments>
</comment>
<comment type="interaction">
    <interactant intactId="EBI-11956541">
        <id>Q9GZY8-5</id>
    </interactant>
    <interactant intactId="EBI-4290634">
        <id>Q9BQE5</id>
        <label>APOL2</label>
    </interactant>
    <organismsDiffer>false</organismsDiffer>
    <experiments>3</experiments>
</comment>
<comment type="interaction">
    <interactant intactId="EBI-11956541">
        <id>Q9GZY8-5</id>
    </interactant>
    <interactant intactId="EBI-2808854">
        <id>Q92482</id>
        <label>AQP3</label>
    </interactant>
    <organismsDiffer>false</organismsDiffer>
    <experiments>3</experiments>
</comment>
<comment type="interaction">
    <interactant intactId="EBI-11956541">
        <id>Q9GZY8-5</id>
    </interactant>
    <interactant intactId="EBI-13059134">
        <id>Q13520</id>
        <label>AQP6</label>
    </interactant>
    <organismsDiffer>false</organismsDiffer>
    <experiments>3</experiments>
</comment>
<comment type="interaction">
    <interactant intactId="EBI-11956541">
        <id>Q9GZY8-5</id>
    </interactant>
    <interactant intactId="EBI-3904417">
        <id>Q99437</id>
        <label>ATP6V0B</label>
    </interactant>
    <organismsDiffer>false</organismsDiffer>
    <experiments>3</experiments>
</comment>
<comment type="interaction">
    <interactant intactId="EBI-11956541">
        <id>Q9GZY8-5</id>
    </interactant>
    <interactant intactId="EBI-749204">
        <id>O15155</id>
        <label>BET1</label>
    </interactant>
    <organismsDiffer>false</organismsDiffer>
    <experiments>3</experiments>
</comment>
<comment type="interaction">
    <interactant intactId="EBI-11956541">
        <id>Q9GZY8-5</id>
    </interactant>
    <interactant intactId="EBI-12062109">
        <id>Q86Z23</id>
        <label>C1QL4</label>
    </interactant>
    <organismsDiffer>false</organismsDiffer>
    <experiments>3</experiments>
</comment>
<comment type="interaction">
    <interactant intactId="EBI-11956541">
        <id>Q9GZY8-5</id>
    </interactant>
    <interactant intactId="EBI-7797864">
        <id>P11912</id>
        <label>CD79A</label>
    </interactant>
    <organismsDiffer>false</organismsDiffer>
    <experiments>3</experiments>
</comment>
<comment type="interaction">
    <interactant intactId="EBI-11956541">
        <id>Q9GZY8-5</id>
    </interactant>
    <interactant intactId="EBI-358858">
        <id>O14735</id>
        <label>CDIPT</label>
    </interactant>
    <organismsDiffer>false</organismsDiffer>
    <experiments>3</experiments>
</comment>
<comment type="interaction">
    <interactant intactId="EBI-11956541">
        <id>Q9GZY8-5</id>
    </interactant>
    <interactant intactId="EBI-946825">
        <id>Q8N111</id>
        <label>CEND1</label>
    </interactant>
    <organismsDiffer>false</organismsDiffer>
    <experiments>3</experiments>
</comment>
<comment type="interaction">
    <interactant intactId="EBI-11956541">
        <id>Q9GZY8-5</id>
    </interactant>
    <interactant intactId="EBI-12256978">
        <id>Q8N6F1-2</id>
        <label>CLDN19</label>
    </interactant>
    <organismsDiffer>false</organismsDiffer>
    <experiments>3</experiments>
</comment>
<comment type="interaction">
    <interactant intactId="EBI-11956541">
        <id>Q9GZY8-5</id>
    </interactant>
    <interactant intactId="EBI-11522780">
        <id>Q96DZ9-2</id>
        <label>CMTM5</label>
    </interactant>
    <organismsDiffer>false</organismsDiffer>
    <experiments>3</experiments>
</comment>
<comment type="interaction">
    <interactant intactId="EBI-11956541">
        <id>Q9GZY8-5</id>
    </interactant>
    <interactant intactId="EBI-12172273">
        <id>O95406</id>
        <label>CNIH1</label>
    </interactant>
    <organismsDiffer>false</organismsDiffer>
    <experiments>3</experiments>
</comment>
<comment type="interaction">
    <interactant intactId="EBI-11956541">
        <id>Q9GZY8-5</id>
    </interactant>
    <interactant intactId="EBI-12211159">
        <id>P29400-2</id>
        <label>COL4A5</label>
    </interactant>
    <organismsDiffer>false</organismsDiffer>
    <experiments>3</experiments>
</comment>
<comment type="interaction">
    <interactant intactId="EBI-11956541">
        <id>Q9GZY8-5</id>
    </interactant>
    <interactant intactId="EBI-12019274">
        <id>Q4LDR2</id>
        <label>CTXN3</label>
    </interactant>
    <organismsDiffer>false</organismsDiffer>
    <experiments>3</experiments>
</comment>
<comment type="interaction">
    <interactant intactId="EBI-11956541">
        <id>Q9GZY8-5</id>
    </interactant>
    <interactant intactId="EBI-1058710">
        <id>O43169</id>
        <label>CYB5B</label>
    </interactant>
    <organismsDiffer>false</organismsDiffer>
    <experiments>3</experiments>
</comment>
<comment type="interaction">
    <interactant intactId="EBI-11956541">
        <id>Q9GZY8-5</id>
    </interactant>
    <interactant intactId="EBI-2680384">
        <id>Q9BQA9</id>
        <label>CYBC1</label>
    </interactant>
    <organismsDiffer>false</organismsDiffer>
    <experiments>3</experiments>
</comment>
<comment type="interaction">
    <interactant intactId="EBI-11956541">
        <id>Q9GZY8-5</id>
    </interactant>
    <interactant intactId="EBI-781551">
        <id>Q9Y282</id>
        <label>ERGIC3</label>
    </interactant>
    <organismsDiffer>false</organismsDiffer>
    <experiments>3</experiments>
</comment>
<comment type="interaction">
    <interactant intactId="EBI-11956541">
        <id>Q9GZY8-5</id>
    </interactant>
    <interactant intactId="EBI-18304435">
        <id>Q5JX71</id>
        <label>FAM209A</label>
    </interactant>
    <organismsDiffer>false</organismsDiffer>
    <experiments>3</experiments>
</comment>
<comment type="interaction">
    <interactant intactId="EBI-11956541">
        <id>Q9GZY8-5</id>
    </interactant>
    <interactant intactId="EBI-18938272">
        <id>Q96KR6</id>
        <label>FAM210B</label>
    </interactant>
    <organismsDiffer>false</organismsDiffer>
    <experiments>3</experiments>
</comment>
<comment type="interaction">
    <interactant intactId="EBI-11956541">
        <id>Q9GZY8-5</id>
    </interactant>
    <interactant intactId="EBI-2876774">
        <id>Q92520</id>
        <label>FAM3C</label>
    </interactant>
    <organismsDiffer>false</organismsDiffer>
    <experiments>3</experiments>
</comment>
<comment type="interaction">
    <interactant intactId="EBI-11956541">
        <id>Q9GZY8-5</id>
    </interactant>
    <interactant intactId="EBI-743099">
        <id>Q969F0</id>
        <label>FATE1</label>
    </interactant>
    <organismsDiffer>false</organismsDiffer>
    <experiments>3</experiments>
</comment>
<comment type="interaction">
    <interactant intactId="EBI-11956541">
        <id>Q9GZY8-5</id>
    </interactant>
    <interactant intactId="EBI-12210457">
        <id>Q8NFU4</id>
        <label>FDCSP</label>
    </interactant>
    <organismsDiffer>false</organismsDiffer>
    <experiments>3</experiments>
</comment>
<comment type="interaction">
    <interactant intactId="EBI-11956541">
        <id>Q9GZY8-5</id>
    </interactant>
    <interactant intactId="EBI-713304">
        <id>Q9H0Q3</id>
        <label>FXYD6</label>
    </interactant>
    <organismsDiffer>false</organismsDiffer>
    <experiments>3</experiments>
</comment>
<comment type="interaction">
    <interactant intactId="EBI-11956541">
        <id>Q9GZY8-5</id>
    </interactant>
    <interactant intactId="EBI-17565645">
        <id>P08034</id>
        <label>GJB1</label>
    </interactant>
    <organismsDiffer>false</organismsDiffer>
    <experiments>3</experiments>
</comment>
<comment type="interaction">
    <interactant intactId="EBI-11956541">
        <id>Q9GZY8-5</id>
    </interactant>
    <interactant intactId="EBI-3933251">
        <id>Q9NS71</id>
        <label>GKN1</label>
    </interactant>
    <organismsDiffer>false</organismsDiffer>
    <experiments>3</experiments>
</comment>
<comment type="interaction">
    <interactant intactId="EBI-11956541">
        <id>Q9GZY8-5</id>
    </interactant>
    <interactant intactId="EBI-4401517">
        <id>O14653</id>
        <label>GOSR2</label>
    </interactant>
    <organismsDiffer>false</organismsDiffer>
    <experiments>3</experiments>
</comment>
<comment type="interaction">
    <interactant intactId="EBI-11956541">
        <id>Q9GZY8-5</id>
    </interactant>
    <interactant intactId="EBI-13345167">
        <id>Q8TDT2</id>
        <label>GPR152</label>
    </interactant>
    <organismsDiffer>false</organismsDiffer>
    <experiments>3</experiments>
</comment>
<comment type="interaction">
    <interactant intactId="EBI-11956541">
        <id>Q9GZY8-5</id>
    </interactant>
    <interactant intactId="EBI-720480">
        <id>P24593</id>
        <label>IGFBP5</label>
    </interactant>
    <organismsDiffer>false</organismsDiffer>
    <experiments>3</experiments>
</comment>
<comment type="interaction">
    <interactant intactId="EBI-11956541">
        <id>Q9GZY8-5</id>
    </interactant>
    <interactant intactId="EBI-10266796">
        <id>Q8N5M9</id>
        <label>JAGN1</label>
    </interactant>
    <organismsDiffer>false</organismsDiffer>
    <experiments>3</experiments>
</comment>
<comment type="interaction">
    <interactant intactId="EBI-11956541">
        <id>Q9GZY8-5</id>
    </interactant>
    <interactant intactId="EBI-8070286">
        <id>O43561-2</id>
        <label>LAT</label>
    </interactant>
    <organismsDiffer>false</organismsDiffer>
    <experiments>3</experiments>
</comment>
<comment type="interaction">
    <interactant intactId="EBI-11956541">
        <id>Q9GZY8-5</id>
    </interactant>
    <interactant intactId="EBI-2820517">
        <id>Q8TAF8</id>
        <label>LHFPL5</label>
    </interactant>
    <organismsDiffer>false</organismsDiffer>
    <experiments>3</experiments>
</comment>
<comment type="interaction">
    <interactant intactId="EBI-11956541">
        <id>Q9GZY8-5</id>
    </interactant>
    <interactant intactId="EBI-12033434">
        <id>Q9UBY5</id>
        <label>LPAR3</label>
    </interactant>
    <organismsDiffer>false</organismsDiffer>
    <experiments>3</experiments>
</comment>
<comment type="interaction">
    <interactant intactId="EBI-11956541">
        <id>Q9GZY8-5</id>
    </interactant>
    <interactant intactId="EBI-16439278">
        <id>Q6FHY5</id>
        <label>MEOX2</label>
    </interactant>
    <organismsDiffer>false</organismsDiffer>
    <experiments>3</experiments>
</comment>
<comment type="interaction">
    <interactant intactId="EBI-11956541">
        <id>Q9GZY8-5</id>
    </interactant>
    <interactant intactId="EBI-11956541">
        <id>Q9GZY8-5</id>
        <label>MFF</label>
    </interactant>
    <organismsDiffer>false</organismsDiffer>
    <experiments>3</experiments>
</comment>
<comment type="interaction">
    <interactant intactId="EBI-11956541">
        <id>Q9GZY8-5</id>
    </interactant>
    <interactant intactId="EBI-8449636">
        <id>P30301</id>
        <label>MIP</label>
    </interactant>
    <organismsDiffer>false</organismsDiffer>
    <experiments>3</experiments>
</comment>
<comment type="interaction">
    <interactant intactId="EBI-11956541">
        <id>Q9GZY8-5</id>
    </interactant>
    <interactant intactId="EBI-6163737">
        <id>Q8N4V1</id>
        <label>MMGT1</label>
    </interactant>
    <organismsDiffer>false</organismsDiffer>
    <experiments>3</experiments>
</comment>
<comment type="interaction">
    <interactant intactId="EBI-11956541">
        <id>Q9GZY8-5</id>
    </interactant>
    <interactant intactId="EBI-12179105">
        <id>O75425</id>
        <label>MOSPD3</label>
    </interactant>
    <organismsDiffer>false</organismsDiffer>
    <experiments>3</experiments>
</comment>
<comment type="interaction">
    <interactant intactId="EBI-11956541">
        <id>Q9GZY8-5</id>
    </interactant>
    <interactant intactId="EBI-963338">
        <id>O95297</id>
        <label>MPZL1</label>
    </interactant>
    <organismsDiffer>false</organismsDiffer>
    <experiments>3</experiments>
</comment>
<comment type="interaction">
    <interactant intactId="EBI-11956541">
        <id>Q9GZY8-5</id>
    </interactant>
    <interactant intactId="EBI-10252783">
        <id>Q6P499</id>
        <label>NIPAL3</label>
    </interactant>
    <organismsDiffer>false</organismsDiffer>
    <experiments>3</experiments>
</comment>
<comment type="interaction">
    <interactant intactId="EBI-11956541">
        <id>Q9GZY8-5</id>
    </interactant>
    <interactant intactId="EBI-12051377">
        <id>Q8N912</id>
        <label>NRAC</label>
    </interactant>
    <organismsDiffer>false</organismsDiffer>
    <experiments>3</experiments>
</comment>
<comment type="interaction">
    <interactant intactId="EBI-11956541">
        <id>Q9GZY8-5</id>
    </interactant>
    <interactant intactId="EBI-10262547">
        <id>Q8IXM6</id>
        <label>NRM</label>
    </interactant>
    <organismsDiffer>false</organismsDiffer>
    <experiments>3</experiments>
</comment>
<comment type="interaction">
    <interactant intactId="EBI-11956541">
        <id>Q9GZY8-5</id>
    </interactant>
    <interactant intactId="EBI-6655799">
        <id>P30990</id>
        <label>NTS</label>
    </interactant>
    <organismsDiffer>false</organismsDiffer>
    <experiments>3</experiments>
</comment>
<comment type="interaction">
    <interactant intactId="EBI-11956541">
        <id>Q9GZY8-5</id>
    </interactant>
    <interactant intactId="EBI-13385956">
        <id>P03999</id>
        <label>OPN1SW</label>
    </interactant>
    <organismsDiffer>false</organismsDiffer>
    <experiments>3</experiments>
</comment>
<comment type="interaction">
    <interactant intactId="EBI-11956541">
        <id>Q9GZY8-5</id>
    </interactant>
    <interactant intactId="EBI-12807478">
        <id>P35372-10</id>
        <label>OPRM1</label>
    </interactant>
    <organismsDiffer>false</organismsDiffer>
    <experiments>3</experiments>
</comment>
<comment type="interaction">
    <interactant intactId="EBI-11956541">
        <id>Q9GZY8-5</id>
    </interactant>
    <interactant intactId="EBI-751877">
        <id>Q9H4B4</id>
        <label>PLK3</label>
    </interactant>
    <organismsDiffer>false</organismsDiffer>
    <experiments>3</experiments>
</comment>
<comment type="interaction">
    <interactant intactId="EBI-11956541">
        <id>Q9GZY8-5</id>
    </interactant>
    <interactant intactId="EBI-3919291">
        <id>Q9Y342</id>
        <label>PLLP</label>
    </interactant>
    <organismsDiffer>false</organismsDiffer>
    <experiments>3</experiments>
</comment>
<comment type="interaction">
    <interactant intactId="EBI-11956541">
        <id>Q9GZY8-5</id>
    </interactant>
    <interactant intactId="EBI-692836">
        <id>P26678</id>
        <label>PLN</label>
    </interactant>
    <organismsDiffer>false</organismsDiffer>
    <experiments>3</experiments>
</comment>
<comment type="interaction">
    <interactant intactId="EBI-11956541">
        <id>Q9GZY8-5</id>
    </interactant>
    <interactant intactId="EBI-12188331">
        <id>P60201-2</id>
        <label>PLP1</label>
    </interactant>
    <organismsDiffer>false</organismsDiffer>
    <experiments>3</experiments>
</comment>
<comment type="interaction">
    <interactant intactId="EBI-11956541">
        <id>Q9GZY8-5</id>
    </interactant>
    <interactant intactId="EBI-16364752">
        <id>Q5VY80</id>
        <label>RAET1L</label>
    </interactant>
    <organismsDiffer>false</organismsDiffer>
    <experiments>3</experiments>
</comment>
<comment type="interaction">
    <interactant intactId="EBI-11956541">
        <id>Q9GZY8-5</id>
    </interactant>
    <interactant intactId="EBI-10192441">
        <id>Q86VR2</id>
        <label>RETREG3</label>
    </interactant>
    <organismsDiffer>false</organismsDiffer>
    <experiments>3</experiments>
</comment>
<comment type="interaction">
    <interactant intactId="EBI-11956541">
        <id>Q9GZY8-5</id>
    </interactant>
    <interactant intactId="EBI-12104986">
        <id>O75783</id>
        <label>RHBDL1</label>
    </interactant>
    <organismsDiffer>false</organismsDiffer>
    <experiments>3</experiments>
</comment>
<comment type="interaction">
    <interactant intactId="EBI-11956541">
        <id>Q9GZY8-5</id>
    </interactant>
    <interactant intactId="EBI-3917235">
        <id>Q9NTJ5</id>
        <label>SACM1L</label>
    </interactant>
    <organismsDiffer>false</organismsDiffer>
    <experiments>3</experiments>
</comment>
<comment type="interaction">
    <interactant intactId="EBI-11956541">
        <id>Q9GZY8-5</id>
    </interactant>
    <interactant intactId="EBI-2855401">
        <id>Q9BY50</id>
        <label>SEC11C</label>
    </interactant>
    <organismsDiffer>false</organismsDiffer>
    <experiments>3</experiments>
</comment>
<comment type="interaction">
    <interactant intactId="EBI-11956541">
        <id>Q9GZY8-5</id>
    </interactant>
    <interactant intactId="EBI-8652744">
        <id>Q96IW7</id>
        <label>SEC22A</label>
    </interactant>
    <organismsDiffer>false</organismsDiffer>
    <experiments>3</experiments>
</comment>
<comment type="interaction">
    <interactant intactId="EBI-11956541">
        <id>Q9GZY8-5</id>
    </interactant>
    <interactant intactId="EBI-1058865">
        <id>O75396</id>
        <label>SEC22B</label>
    </interactant>
    <organismsDiffer>false</organismsDiffer>
    <experiments>3</experiments>
</comment>
<comment type="interaction">
    <interactant intactId="EBI-11956541">
        <id>Q9GZY8-5</id>
    </interactant>
    <interactant intactId="EBI-81088">
        <id>Q15436</id>
        <label>SEC23A</label>
    </interactant>
    <organismsDiffer>false</organismsDiffer>
    <experiments>3</experiments>
</comment>
<comment type="interaction">
    <interactant intactId="EBI-11956541">
        <id>Q9GZY8-5</id>
    </interactant>
    <interactant intactId="EBI-18037857">
        <id>Q3SXP7</id>
        <label>SHISAL1</label>
    </interactant>
    <organismsDiffer>false</organismsDiffer>
    <experiments>3</experiments>
</comment>
<comment type="interaction">
    <interactant intactId="EBI-11956541">
        <id>Q9GZY8-5</id>
    </interactant>
    <interactant intactId="EBI-17598000">
        <id>Q16572</id>
        <label>SLC18A3</label>
    </interactant>
    <organismsDiffer>false</organismsDiffer>
    <experiments>3</experiments>
</comment>
<comment type="interaction">
    <interactant intactId="EBI-11956541">
        <id>Q9GZY8-5</id>
    </interactant>
    <interactant intactId="EBI-12147661">
        <id>P78383</id>
        <label>SLC35B1</label>
    </interactant>
    <organismsDiffer>false</organismsDiffer>
    <experiments>3</experiments>
</comment>
<comment type="interaction">
    <interactant intactId="EBI-11956541">
        <id>Q9GZY8-5</id>
    </interactant>
    <interactant intactId="EBI-10290130">
        <id>Q96JW4</id>
        <label>SLC41A2</label>
    </interactant>
    <organismsDiffer>false</organismsDiffer>
    <experiments>3</experiments>
</comment>
<comment type="interaction">
    <interactant intactId="EBI-11956541">
        <id>Q9GZY8-5</id>
    </interactant>
    <interactant intactId="EBI-4289564">
        <id>P30825</id>
        <label>SLC7A1</label>
    </interactant>
    <organismsDiffer>false</organismsDiffer>
    <experiments>3</experiments>
</comment>
<comment type="interaction">
    <interactant intactId="EBI-11956541">
        <id>Q9GZY8-5</id>
    </interactant>
    <interactant intactId="EBI-5235586">
        <id>Q8TBB6</id>
        <label>SLC7A14</label>
    </interactant>
    <organismsDiffer>false</organismsDiffer>
    <experiments>3</experiments>
</comment>
<comment type="interaction">
    <interactant intactId="EBI-11956541">
        <id>Q9GZY8-5</id>
    </interactant>
    <interactant intactId="EBI-13292283">
        <id>Q9UHI5</id>
        <label>SLC7A8</label>
    </interactant>
    <organismsDiffer>false</organismsDiffer>
    <experiments>3</experiments>
</comment>
<comment type="interaction">
    <interactant intactId="EBI-11956541">
        <id>Q9GZY8-5</id>
    </interactant>
    <interactant intactId="EBI-12188413">
        <id>B2RUZ4</id>
        <label>SMIM1</label>
    </interactant>
    <organismsDiffer>false</organismsDiffer>
    <experiments>3</experiments>
</comment>
<comment type="interaction">
    <interactant intactId="EBI-11956541">
        <id>Q9GZY8-5</id>
    </interactant>
    <interactant intactId="EBI-12200293">
        <id>P0DN84</id>
        <label>STRIT1</label>
    </interactant>
    <organismsDiffer>false</organismsDiffer>
    <experiments>3</experiments>
</comment>
<comment type="interaction">
    <interactant intactId="EBI-11956541">
        <id>Q9GZY8-5</id>
    </interactant>
    <interactant intactId="EBI-3221827">
        <id>O15400</id>
        <label>STX7</label>
    </interactant>
    <organismsDiffer>false</organismsDiffer>
    <experiments>3</experiments>
</comment>
<comment type="interaction">
    <interactant intactId="EBI-11956541">
        <id>Q9GZY8-5</id>
    </interactant>
    <interactant intactId="EBI-727240">
        <id>Q9UNK0</id>
        <label>STX8</label>
    </interactant>
    <organismsDiffer>false</organismsDiffer>
    <experiments>3</experiments>
</comment>
<comment type="interaction">
    <interactant intactId="EBI-11956541">
        <id>Q9GZY8-5</id>
    </interactant>
    <interactant intactId="EBI-10329860">
        <id>Q9Y6I9</id>
        <label>TEX264</label>
    </interactant>
    <organismsDiffer>false</organismsDiffer>
    <experiments>3</experiments>
</comment>
<comment type="interaction">
    <interactant intactId="EBI-11956541">
        <id>Q9GZY8-5</id>
    </interactant>
    <interactant intactId="EBI-355727">
        <id>P02786</id>
        <label>TFRC</label>
    </interactant>
    <organismsDiffer>false</organismsDiffer>
    <experiments>3</experiments>
</comment>
<comment type="interaction">
    <interactant intactId="EBI-11956541">
        <id>Q9GZY8-5</id>
    </interactant>
    <interactant intactId="EBI-12892691">
        <id>Q6P4D7</id>
        <label>TM6SF1</label>
    </interactant>
    <organismsDiffer>false</organismsDiffer>
    <experiments>3</experiments>
</comment>
<comment type="interaction">
    <interactant intactId="EBI-11956541">
        <id>Q9GZY8-5</id>
    </interactant>
    <interactant intactId="EBI-10694905">
        <id>Q5BJH2-2</id>
        <label>TMEM128</label>
    </interactant>
    <organismsDiffer>false</organismsDiffer>
    <experiments>3</experiments>
</comment>
<comment type="interaction">
    <interactant intactId="EBI-11956541">
        <id>Q9GZY8-5</id>
    </interactant>
    <interactant intactId="EBI-2844246">
        <id>Q9NV12</id>
        <label>TMEM140</label>
    </interactant>
    <organismsDiffer>false</organismsDiffer>
    <experiments>3</experiments>
</comment>
<comment type="interaction">
    <interactant intactId="EBI-11956541">
        <id>Q9GZY8-5</id>
    </interactant>
    <interactant intactId="EBI-2339195">
        <id>Q9P0S9</id>
        <label>TMEM14C</label>
    </interactant>
    <organismsDiffer>false</organismsDiffer>
    <experiments>3</experiments>
</comment>
<comment type="interaction">
    <interactant intactId="EBI-11956541">
        <id>Q9GZY8-5</id>
    </interactant>
    <interactant intactId="EBI-11994282">
        <id>Q5SNT2-2</id>
        <label>TMEM201</label>
    </interactant>
    <organismsDiffer>false</organismsDiffer>
    <experiments>3</experiments>
</comment>
<comment type="interaction">
    <interactant intactId="EBI-11956541">
        <id>Q9GZY8-5</id>
    </interactant>
    <interactant intactId="EBI-10173151">
        <id>A2RU14</id>
        <label>TMEM218</label>
    </interactant>
    <organismsDiffer>false</organismsDiffer>
    <experiments>3</experiments>
</comment>
<comment type="interaction">
    <interactant intactId="EBI-11956541">
        <id>Q9GZY8-5</id>
    </interactant>
    <interactant intactId="EBI-12195227">
        <id>Q8NBD8</id>
        <label>TMEM229B</label>
    </interactant>
    <organismsDiffer>false</organismsDiffer>
    <experiments>3</experiments>
</comment>
<comment type="interaction">
    <interactant intactId="EBI-11956541">
        <id>Q9GZY8-5</id>
    </interactant>
    <interactant intactId="EBI-10982110">
        <id>Q96Q45-2</id>
        <label>TMEM237</label>
    </interactant>
    <organismsDiffer>false</organismsDiffer>
    <experiments>3</experiments>
</comment>
<comment type="interaction">
    <interactant intactId="EBI-11956541">
        <id>Q9GZY8-5</id>
    </interactant>
    <interactant intactId="EBI-11956809">
        <id>Q8TBM7</id>
        <label>TMEM254</label>
    </interactant>
    <organismsDiffer>false</organismsDiffer>
    <experiments>3</experiments>
</comment>
<comment type="interaction">
    <interactant intactId="EBI-11956541">
        <id>Q9GZY8-5</id>
    </interactant>
    <interactant intactId="EBI-12038591">
        <id>Q69YG0</id>
        <label>TMEM42</label>
    </interactant>
    <organismsDiffer>false</organismsDiffer>
    <experiments>3</experiments>
</comment>
<comment type="interaction">
    <interactant intactId="EBI-11956541">
        <id>Q9GZY8-5</id>
    </interactant>
    <interactant intactId="EBI-2852148">
        <id>Q9H2L4</id>
        <label>TMEM60</label>
    </interactant>
    <organismsDiffer>false</organismsDiffer>
    <experiments>3</experiments>
</comment>
<comment type="interaction">
    <interactant intactId="EBI-11956541">
        <id>Q9GZY8-5</id>
    </interactant>
    <interactant intactId="EBI-2548832">
        <id>Q8N661</id>
        <label>TMEM86B</label>
    </interactant>
    <organismsDiffer>false</organismsDiffer>
    <experiments>6</experiments>
</comment>
<comment type="interaction">
    <interactant intactId="EBI-11956541">
        <id>Q9GZY8-5</id>
    </interactant>
    <interactant intactId="EBI-17198826">
        <id>Q6PEY1</id>
        <label>TMEM88</label>
    </interactant>
    <organismsDiffer>false</organismsDiffer>
    <experiments>3</experiments>
</comment>
<comment type="interaction">
    <interactant intactId="EBI-11956541">
        <id>Q9GZY8-5</id>
    </interactant>
    <interactant intactId="EBI-12111910">
        <id>Q5BJF2</id>
        <label>TMEM97</label>
    </interactant>
    <organismsDiffer>false</organismsDiffer>
    <experiments>3</experiments>
</comment>
<comment type="interaction">
    <interactant intactId="EBI-11956541">
        <id>Q9GZY8-5</id>
    </interactant>
    <interactant intactId="EBI-6447886">
        <id>Q9Y320</id>
        <label>TMX2</label>
    </interactant>
    <organismsDiffer>false</organismsDiffer>
    <experiments>3</experiments>
</comment>
<comment type="interaction">
    <interactant intactId="EBI-11956541">
        <id>Q9GZY8-5</id>
    </interactant>
    <interactant intactId="EBI-765817">
        <id>Q9Y228</id>
        <label>TRAF3IP3</label>
    </interactant>
    <organismsDiffer>false</organismsDiffer>
    <experiments>3</experiments>
</comment>
<comment type="interaction">
    <interactant intactId="EBI-11956541">
        <id>Q9GZY8-5</id>
    </interactant>
    <interactant intactId="EBI-11996766">
        <id>Q8N609</id>
        <label>TRAM1L1</label>
    </interactant>
    <organismsDiffer>false</organismsDiffer>
    <experiments>3</experiments>
</comment>
<comment type="interaction">
    <interactant intactId="EBI-11956541">
        <id>Q9GZY8-5</id>
    </interactant>
    <interactant intactId="EBI-3914288">
        <id>O60636</id>
        <label>TSPAN2</label>
    </interactant>
    <organismsDiffer>false</organismsDiffer>
    <experiments>3</experiments>
</comment>
<comment type="interaction">
    <interactant intactId="EBI-11956541">
        <id>Q9GZY8-5</id>
    </interactant>
    <interactant intactId="EBI-12045841">
        <id>Q86UF1</id>
        <label>TSPAN33</label>
    </interactant>
    <organismsDiffer>false</organismsDiffer>
    <experiments>3</experiments>
</comment>
<comment type="interaction">
    <interactant intactId="EBI-11956541">
        <id>Q9GZY8-5</id>
    </interactant>
    <interactant intactId="EBI-12195249">
        <id>Q5TGU0</id>
        <label>TSPO2</label>
    </interactant>
    <organismsDiffer>false</organismsDiffer>
    <experiments>3</experiments>
</comment>
<comment type="interaction">
    <interactant intactId="EBI-11956541">
        <id>Q9GZY8-5</id>
    </interactant>
    <interactant intactId="EBI-10243654">
        <id>Q5BVD1</id>
        <label>TTMP</label>
    </interactant>
    <organismsDiffer>false</organismsDiffer>
    <experiments>3</experiments>
</comment>
<comment type="interaction">
    <interactant intactId="EBI-11956541">
        <id>Q9GZY8-5</id>
    </interactant>
    <interactant intactId="EBI-11988865">
        <id>A5PKU2</id>
        <label>TUSC5</label>
    </interactant>
    <organismsDiffer>false</organismsDiffer>
    <experiments>3</experiments>
</comment>
<comment type="interaction">
    <interactant intactId="EBI-11956541">
        <id>Q9GZY8-5</id>
    </interactant>
    <interactant intactId="EBI-7601760">
        <id>Q53HI1</id>
        <label>UNC50</label>
    </interactant>
    <organismsDiffer>false</organismsDiffer>
    <experiments>3</experiments>
</comment>
<comment type="interaction">
    <interactant intactId="EBI-11956541">
        <id>Q9GZY8-5</id>
    </interactant>
    <interactant intactId="EBI-4401271">
        <id>Q9H1C4</id>
        <label>UNC93B1</label>
    </interactant>
    <organismsDiffer>false</organismsDiffer>
    <experiments>3</experiments>
</comment>
<comment type="interaction">
    <interactant intactId="EBI-11956541">
        <id>Q9GZY8-5</id>
    </interactant>
    <interactant intactId="EBI-12237619">
        <id>O75841</id>
        <label>UPK1B</label>
    </interactant>
    <organismsDiffer>false</organismsDiffer>
    <experiments>3</experiments>
</comment>
<comment type="interaction">
    <interactant intactId="EBI-11956541">
        <id>Q9GZY8-5</id>
    </interactant>
    <interactant intactId="EBI-744953">
        <id>O75379</id>
        <label>VAMP4</label>
    </interactant>
    <organismsDiffer>false</organismsDiffer>
    <experiments>3</experiments>
</comment>
<comment type="interaction">
    <interactant intactId="EBI-11956541">
        <id>Q9GZY8-5</id>
    </interactant>
    <interactant intactId="EBI-718439">
        <id>O95159</id>
        <label>ZFPL1</label>
    </interactant>
    <organismsDiffer>false</organismsDiffer>
    <experiments>3</experiments>
</comment>
<comment type="subcellular location">
    <subcellularLocation>
        <location evidence="5 7">Mitochondrion outer membrane</location>
        <topology evidence="3">Single-pass type IV membrane protein</topology>
    </subcellularLocation>
    <subcellularLocation>
        <location evidence="5 7">Peroxisome</location>
    </subcellularLocation>
    <subcellularLocation>
        <location evidence="1">Cytoplasmic vesicle</location>
        <location evidence="1">Secretory vesicle</location>
        <location evidence="1">Synaptic vesicle</location>
    </subcellularLocation>
</comment>
<comment type="alternative products">
    <event type="alternative splicing"/>
    <isoform>
        <id>Q9GZY8-1</id>
        <name>1</name>
        <sequence type="displayed"/>
    </isoform>
    <isoform>
        <id>Q9GZY8-2</id>
        <name>2</name>
        <sequence type="described" ref="VSP_025954 VSP_025957"/>
    </isoform>
    <isoform>
        <id>Q9GZY8-3</id>
        <name>3</name>
        <sequence type="described" ref="VSP_025954 VSP_025958"/>
    </isoform>
    <isoform>
        <id>Q9GZY8-4</id>
        <name>4</name>
        <sequence type="described" ref="VSP_025954 VSP_025955"/>
    </isoform>
    <isoform>
        <id>Q9GZY8-5</id>
        <name>5</name>
        <sequence type="described" ref="VSP_025954 VSP_025956"/>
    </isoform>
</comment>
<comment type="tissue specificity">
    <text evidence="5">Highly expressed in heart, kidney, liver, brain, muscle, and stomach.</text>
</comment>
<comment type="disease" evidence="9">
    <disease id="DI-04810">
        <name>Encephalopathy due to defective mitochondrial and peroxisomal fission 2</name>
        <acronym>EMPF2</acronym>
        <description>An autosomal recessive disorder characterized by delayed psychomotor development, severe hypotonia with inability to walk, microcephaly, and abnormal signals in the basal ganglia. More variable features include early-onset seizures, optic atrophy, and peripheral neuropathy.</description>
        <dbReference type="MIM" id="617086"/>
    </disease>
    <text>The disease is caused by variants affecting the gene represented in this entry.</text>
</comment>
<comment type="similarity">
    <text evidence="13">Belongs to the Tango11 family.</text>
</comment>
<reference key="1">
    <citation type="journal article" date="2008" name="Mol. Biol. Cell">
        <title>The novel tail-anchored membrane protein Mff controls mitochondrial and peroxisomal fission in mammalian cells.</title>
        <authorList>
            <person name="Gandre-Babbe S."/>
            <person name="van der Bliek A.M."/>
        </authorList>
    </citation>
    <scope>NUCLEOTIDE SEQUENCE [MRNA] (ISOFORM 1)</scope>
    <scope>FUNCTION</scope>
    <scope>SUBCELLULAR LOCATION</scope>
    <scope>TOPOLOGY</scope>
    <scope>TISSUE SPECIFICITY</scope>
</reference>
<reference key="2">
    <citation type="journal article" date="2004" name="Nat. Genet.">
        <title>Complete sequencing and characterization of 21,243 full-length human cDNAs.</title>
        <authorList>
            <person name="Ota T."/>
            <person name="Suzuki Y."/>
            <person name="Nishikawa T."/>
            <person name="Otsuki T."/>
            <person name="Sugiyama T."/>
            <person name="Irie R."/>
            <person name="Wakamatsu A."/>
            <person name="Hayashi K."/>
            <person name="Sato H."/>
            <person name="Nagai K."/>
            <person name="Kimura K."/>
            <person name="Makita H."/>
            <person name="Sekine M."/>
            <person name="Obayashi M."/>
            <person name="Nishi T."/>
            <person name="Shibahara T."/>
            <person name="Tanaka T."/>
            <person name="Ishii S."/>
            <person name="Yamamoto J."/>
            <person name="Saito K."/>
            <person name="Kawai Y."/>
            <person name="Isono Y."/>
            <person name="Nakamura Y."/>
            <person name="Nagahari K."/>
            <person name="Murakami K."/>
            <person name="Yasuda T."/>
            <person name="Iwayanagi T."/>
            <person name="Wagatsuma M."/>
            <person name="Shiratori A."/>
            <person name="Sudo H."/>
            <person name="Hosoiri T."/>
            <person name="Kaku Y."/>
            <person name="Kodaira H."/>
            <person name="Kondo H."/>
            <person name="Sugawara M."/>
            <person name="Takahashi M."/>
            <person name="Kanda K."/>
            <person name="Yokoi T."/>
            <person name="Furuya T."/>
            <person name="Kikkawa E."/>
            <person name="Omura Y."/>
            <person name="Abe K."/>
            <person name="Kamihara K."/>
            <person name="Katsuta N."/>
            <person name="Sato K."/>
            <person name="Tanikawa M."/>
            <person name="Yamazaki M."/>
            <person name="Ninomiya K."/>
            <person name="Ishibashi T."/>
            <person name="Yamashita H."/>
            <person name="Murakawa K."/>
            <person name="Fujimori K."/>
            <person name="Tanai H."/>
            <person name="Kimata M."/>
            <person name="Watanabe M."/>
            <person name="Hiraoka S."/>
            <person name="Chiba Y."/>
            <person name="Ishida S."/>
            <person name="Ono Y."/>
            <person name="Takiguchi S."/>
            <person name="Watanabe S."/>
            <person name="Yosida M."/>
            <person name="Hotuta T."/>
            <person name="Kusano J."/>
            <person name="Kanehori K."/>
            <person name="Takahashi-Fujii A."/>
            <person name="Hara H."/>
            <person name="Tanase T.-O."/>
            <person name="Nomura Y."/>
            <person name="Togiya S."/>
            <person name="Komai F."/>
            <person name="Hara R."/>
            <person name="Takeuchi K."/>
            <person name="Arita M."/>
            <person name="Imose N."/>
            <person name="Musashino K."/>
            <person name="Yuuki H."/>
            <person name="Oshima A."/>
            <person name="Sasaki N."/>
            <person name="Aotsuka S."/>
            <person name="Yoshikawa Y."/>
            <person name="Matsunawa H."/>
            <person name="Ichihara T."/>
            <person name="Shiohata N."/>
            <person name="Sano S."/>
            <person name="Moriya S."/>
            <person name="Momiyama H."/>
            <person name="Satoh N."/>
            <person name="Takami S."/>
            <person name="Terashima Y."/>
            <person name="Suzuki O."/>
            <person name="Nakagawa S."/>
            <person name="Senoh A."/>
            <person name="Mizoguchi H."/>
            <person name="Goto Y."/>
            <person name="Shimizu F."/>
            <person name="Wakebe H."/>
            <person name="Hishigaki H."/>
            <person name="Watanabe T."/>
            <person name="Sugiyama A."/>
            <person name="Takemoto M."/>
            <person name="Kawakami B."/>
            <person name="Yamazaki M."/>
            <person name="Watanabe K."/>
            <person name="Kumagai A."/>
            <person name="Itakura S."/>
            <person name="Fukuzumi Y."/>
            <person name="Fujimori Y."/>
            <person name="Komiyama M."/>
            <person name="Tashiro H."/>
            <person name="Tanigami A."/>
            <person name="Fujiwara T."/>
            <person name="Ono T."/>
            <person name="Yamada K."/>
            <person name="Fujii Y."/>
            <person name="Ozaki K."/>
            <person name="Hirao M."/>
            <person name="Ohmori Y."/>
            <person name="Kawabata A."/>
            <person name="Hikiji T."/>
            <person name="Kobatake N."/>
            <person name="Inagaki H."/>
            <person name="Ikema Y."/>
            <person name="Okamoto S."/>
            <person name="Okitani R."/>
            <person name="Kawakami T."/>
            <person name="Noguchi S."/>
            <person name="Itoh T."/>
            <person name="Shigeta K."/>
            <person name="Senba T."/>
            <person name="Matsumura K."/>
            <person name="Nakajima Y."/>
            <person name="Mizuno T."/>
            <person name="Morinaga M."/>
            <person name="Sasaki M."/>
            <person name="Togashi T."/>
            <person name="Oyama M."/>
            <person name="Hata H."/>
            <person name="Watanabe M."/>
            <person name="Komatsu T."/>
            <person name="Mizushima-Sugano J."/>
            <person name="Satoh T."/>
            <person name="Shirai Y."/>
            <person name="Takahashi Y."/>
            <person name="Nakagawa K."/>
            <person name="Okumura K."/>
            <person name="Nagase T."/>
            <person name="Nomura N."/>
            <person name="Kikuchi H."/>
            <person name="Masuho Y."/>
            <person name="Yamashita R."/>
            <person name="Nakai K."/>
            <person name="Yada T."/>
            <person name="Nakamura Y."/>
            <person name="Ohara O."/>
            <person name="Isogai T."/>
            <person name="Sugano S."/>
        </authorList>
    </citation>
    <scope>NUCLEOTIDE SEQUENCE [LARGE SCALE MRNA] (ISOFORM 2)</scope>
</reference>
<reference key="3">
    <citation type="submission" date="2000-01" db="EMBL/GenBank/DDBJ databases">
        <title>A novel gene expressed in human liver non-tumor tissues.</title>
        <authorList>
            <person name="Li Y."/>
            <person name="Wu T."/>
            <person name="Xu S."/>
            <person name="Ren S."/>
            <person name="Chen Z."/>
            <person name="Han Z."/>
        </authorList>
    </citation>
    <scope>NUCLEOTIDE SEQUENCE [LARGE SCALE MRNA] (ISOFORM 4)</scope>
    <source>
        <tissue>Liver</tissue>
    </source>
</reference>
<reference key="4">
    <citation type="submission" date="2000-05" db="EMBL/GenBank/DDBJ databases">
        <authorList>
            <person name="Xu X."/>
            <person name="Yang Y."/>
            <person name="Gao G."/>
            <person name="Xiao H."/>
            <person name="Chen Z."/>
            <person name="Han Z."/>
        </authorList>
    </citation>
    <scope>NUCLEOTIDE SEQUENCE [LARGE SCALE MRNA] (ISOFORM 1)</scope>
    <source>
        <tissue>Adrenal gland</tissue>
    </source>
</reference>
<reference key="5">
    <citation type="journal article" date="2005" name="Nature">
        <title>Generation and annotation of the DNA sequences of human chromosomes 2 and 4.</title>
        <authorList>
            <person name="Hillier L.W."/>
            <person name="Graves T.A."/>
            <person name="Fulton R.S."/>
            <person name="Fulton L.A."/>
            <person name="Pepin K.H."/>
            <person name="Minx P."/>
            <person name="Wagner-McPherson C."/>
            <person name="Layman D."/>
            <person name="Wylie K."/>
            <person name="Sekhon M."/>
            <person name="Becker M.C."/>
            <person name="Fewell G.A."/>
            <person name="Delehaunty K.D."/>
            <person name="Miner T.L."/>
            <person name="Nash W.E."/>
            <person name="Kremitzki C."/>
            <person name="Oddy L."/>
            <person name="Du H."/>
            <person name="Sun H."/>
            <person name="Bradshaw-Cordum H."/>
            <person name="Ali J."/>
            <person name="Carter J."/>
            <person name="Cordes M."/>
            <person name="Harris A."/>
            <person name="Isak A."/>
            <person name="van Brunt A."/>
            <person name="Nguyen C."/>
            <person name="Du F."/>
            <person name="Courtney L."/>
            <person name="Kalicki J."/>
            <person name="Ozersky P."/>
            <person name="Abbott S."/>
            <person name="Armstrong J."/>
            <person name="Belter E.A."/>
            <person name="Caruso L."/>
            <person name="Cedroni M."/>
            <person name="Cotton M."/>
            <person name="Davidson T."/>
            <person name="Desai A."/>
            <person name="Elliott G."/>
            <person name="Erb T."/>
            <person name="Fronick C."/>
            <person name="Gaige T."/>
            <person name="Haakenson W."/>
            <person name="Haglund K."/>
            <person name="Holmes A."/>
            <person name="Harkins R."/>
            <person name="Kim K."/>
            <person name="Kruchowski S.S."/>
            <person name="Strong C.M."/>
            <person name="Grewal N."/>
            <person name="Goyea E."/>
            <person name="Hou S."/>
            <person name="Levy A."/>
            <person name="Martinka S."/>
            <person name="Mead K."/>
            <person name="McLellan M.D."/>
            <person name="Meyer R."/>
            <person name="Randall-Maher J."/>
            <person name="Tomlinson C."/>
            <person name="Dauphin-Kohlberg S."/>
            <person name="Kozlowicz-Reilly A."/>
            <person name="Shah N."/>
            <person name="Swearengen-Shahid S."/>
            <person name="Snider J."/>
            <person name="Strong J.T."/>
            <person name="Thompson J."/>
            <person name="Yoakum M."/>
            <person name="Leonard S."/>
            <person name="Pearman C."/>
            <person name="Trani L."/>
            <person name="Radionenko M."/>
            <person name="Waligorski J.E."/>
            <person name="Wang C."/>
            <person name="Rock S.M."/>
            <person name="Tin-Wollam A.-M."/>
            <person name="Maupin R."/>
            <person name="Latreille P."/>
            <person name="Wendl M.C."/>
            <person name="Yang S.-P."/>
            <person name="Pohl C."/>
            <person name="Wallis J.W."/>
            <person name="Spieth J."/>
            <person name="Bieri T.A."/>
            <person name="Berkowicz N."/>
            <person name="Nelson J.O."/>
            <person name="Osborne J."/>
            <person name="Ding L."/>
            <person name="Meyer R."/>
            <person name="Sabo A."/>
            <person name="Shotland Y."/>
            <person name="Sinha P."/>
            <person name="Wohldmann P.E."/>
            <person name="Cook L.L."/>
            <person name="Hickenbotham M.T."/>
            <person name="Eldred J."/>
            <person name="Williams D."/>
            <person name="Jones T.A."/>
            <person name="She X."/>
            <person name="Ciccarelli F.D."/>
            <person name="Izaurralde E."/>
            <person name="Taylor J."/>
            <person name="Schmutz J."/>
            <person name="Myers R.M."/>
            <person name="Cox D.R."/>
            <person name="Huang X."/>
            <person name="McPherson J.D."/>
            <person name="Mardis E.R."/>
            <person name="Clifton S.W."/>
            <person name="Warren W.C."/>
            <person name="Chinwalla A.T."/>
            <person name="Eddy S.R."/>
            <person name="Marra M.A."/>
            <person name="Ovcharenko I."/>
            <person name="Furey T.S."/>
            <person name="Miller W."/>
            <person name="Eichler E.E."/>
            <person name="Bork P."/>
            <person name="Suyama M."/>
            <person name="Torrents D."/>
            <person name="Waterston R.H."/>
            <person name="Wilson R.K."/>
        </authorList>
    </citation>
    <scope>NUCLEOTIDE SEQUENCE [LARGE SCALE GENOMIC DNA]</scope>
</reference>
<reference key="6">
    <citation type="journal article" date="2004" name="Genome Res.">
        <title>The status, quality, and expansion of the NIH full-length cDNA project: the Mammalian Gene Collection (MGC).</title>
        <authorList>
            <consortium name="The MGC Project Team"/>
        </authorList>
    </citation>
    <scope>NUCLEOTIDE SEQUENCE [LARGE SCALE MRNA] (ISOFORMS 3 AND 5)</scope>
    <source>
        <tissue>Placenta</tissue>
    </source>
</reference>
<reference key="7">
    <citation type="journal article" date="2007" name="BMC Genomics">
        <title>The full-ORF clone resource of the German cDNA consortium.</title>
        <authorList>
            <person name="Bechtel S."/>
            <person name="Rosenfelder H."/>
            <person name="Duda A."/>
            <person name="Schmidt C.P."/>
            <person name="Ernst U."/>
            <person name="Wellenreuther R."/>
            <person name="Mehrle A."/>
            <person name="Schuster C."/>
            <person name="Bahr A."/>
            <person name="Bloecker H."/>
            <person name="Heubner D."/>
            <person name="Hoerlein A."/>
            <person name="Michel G."/>
            <person name="Wedler H."/>
            <person name="Koehrer K."/>
            <person name="Ottenwaelder B."/>
            <person name="Poustka A."/>
            <person name="Wiemann S."/>
            <person name="Schupp I."/>
        </authorList>
    </citation>
    <scope>NUCLEOTIDE SEQUENCE [LARGE SCALE MRNA] OF 199-342</scope>
    <source>
        <tissue>Stomach</tissue>
    </source>
</reference>
<reference key="8">
    <citation type="journal article" date="2006" name="Cell">
        <title>Global, in vivo, and site-specific phosphorylation dynamics in signaling networks.</title>
        <authorList>
            <person name="Olsen J.V."/>
            <person name="Blagoev B."/>
            <person name="Gnad F."/>
            <person name="Macek B."/>
            <person name="Kumar C."/>
            <person name="Mortensen P."/>
            <person name="Mann M."/>
        </authorList>
    </citation>
    <scope>PHOSPHORYLATION [LARGE SCALE ANALYSIS] AT SER-155 AND SER-157</scope>
    <scope>IDENTIFICATION BY MASS SPECTROMETRY [LARGE SCALE ANALYSIS]</scope>
    <source>
        <tissue>Cervix carcinoma</tissue>
    </source>
</reference>
<reference key="9">
    <citation type="journal article" date="2008" name="J. Proteome Res.">
        <title>Combining protein-based IMAC, peptide-based IMAC, and MudPIT for efficient phosphoproteomic analysis.</title>
        <authorList>
            <person name="Cantin G.T."/>
            <person name="Yi W."/>
            <person name="Lu B."/>
            <person name="Park S.K."/>
            <person name="Xu T."/>
            <person name="Lee J.-D."/>
            <person name="Yates J.R. III"/>
        </authorList>
    </citation>
    <scope>IDENTIFICATION BY MASS SPECTROMETRY [LARGE SCALE ANALYSIS]</scope>
    <source>
        <tissue>Cervix carcinoma</tissue>
    </source>
</reference>
<reference key="10">
    <citation type="journal article" date="2008" name="Proc. Natl. Acad. Sci. U.S.A.">
        <title>A quantitative atlas of mitotic phosphorylation.</title>
        <authorList>
            <person name="Dephoure N."/>
            <person name="Zhou C."/>
            <person name="Villen J."/>
            <person name="Beausoleil S.A."/>
            <person name="Bakalarski C.E."/>
            <person name="Elledge S.J."/>
            <person name="Gygi S.P."/>
        </authorList>
    </citation>
    <scope>PHOSPHORYLATION [LARGE SCALE ANALYSIS] AT THR-149 AND SER-151 (ISOFORM 2)</scope>
    <scope>IDENTIFICATION BY MASS SPECTROMETRY [LARGE SCALE ANALYSIS]</scope>
    <source>
        <tissue>Cervix carcinoma</tissue>
    </source>
</reference>
<reference key="11">
    <citation type="journal article" date="2009" name="Sci. Signal.">
        <title>Quantitative phosphoproteomic analysis of T cell receptor signaling reveals system-wide modulation of protein-protein interactions.</title>
        <authorList>
            <person name="Mayya V."/>
            <person name="Lundgren D.H."/>
            <person name="Hwang S.-I."/>
            <person name="Rezaul K."/>
            <person name="Wu L."/>
            <person name="Eng J.K."/>
            <person name="Rodionov V."/>
            <person name="Han D.K."/>
        </authorList>
    </citation>
    <scope>IDENTIFICATION BY MASS SPECTROMETRY [LARGE SCALE ANALYSIS]</scope>
    <source>
        <tissue>Leukemic T-cell</tissue>
    </source>
</reference>
<reference key="12">
    <citation type="journal article" date="2010" name="Sci. Signal.">
        <title>Quantitative phosphoproteomics reveals widespread full phosphorylation site occupancy during mitosis.</title>
        <authorList>
            <person name="Olsen J.V."/>
            <person name="Vermeulen M."/>
            <person name="Santamaria A."/>
            <person name="Kumar C."/>
            <person name="Miller M.L."/>
            <person name="Jensen L.J."/>
            <person name="Gnad F."/>
            <person name="Cox J."/>
            <person name="Jensen T.S."/>
            <person name="Nigg E.A."/>
            <person name="Brunak S."/>
            <person name="Mann M."/>
        </authorList>
    </citation>
    <scope>PHOSPHORYLATION [LARGE SCALE ANALYSIS] AT THR-115; SER-155; SER-157; THR-200; SER-202; SER-229 AND SER-233</scope>
    <scope>PHOSPHORYLATION [LARGE SCALE ANALYSIS] AT THR-149 AND SER-151 (ISOFORM 2)</scope>
    <scope>PHOSPHORYLATION [LARGE SCALE ANALYSIS] AT SER-146 (ISOFORM 5)</scope>
    <scope>IDENTIFICATION BY MASS SPECTROMETRY [LARGE SCALE ANALYSIS]</scope>
    <source>
        <tissue>Cervix carcinoma</tissue>
    </source>
</reference>
<reference key="13">
    <citation type="journal article" date="2011" name="BMC Syst. Biol.">
        <title>Initial characterization of the human central proteome.</title>
        <authorList>
            <person name="Burkard T.R."/>
            <person name="Planyavsky M."/>
            <person name="Kaupe I."/>
            <person name="Breitwieser F.P."/>
            <person name="Buerckstuemmer T."/>
            <person name="Bennett K.L."/>
            <person name="Superti-Furga G."/>
            <person name="Colinge J."/>
        </authorList>
    </citation>
    <scope>IDENTIFICATION BY MASS SPECTROMETRY [LARGE SCALE ANALYSIS]</scope>
</reference>
<reference key="14">
    <citation type="journal article" date="2011" name="Sci. Signal.">
        <title>System-wide temporal characterization of the proteome and phosphoproteome of human embryonic stem cell differentiation.</title>
        <authorList>
            <person name="Rigbolt K.T."/>
            <person name="Prokhorova T.A."/>
            <person name="Akimov V."/>
            <person name="Henningsen J."/>
            <person name="Johansen P.T."/>
            <person name="Kratchmarova I."/>
            <person name="Kassem M."/>
            <person name="Mann M."/>
            <person name="Olsen J.V."/>
            <person name="Blagoev B."/>
        </authorList>
    </citation>
    <scope>PHOSPHORYLATION [LARGE SCALE ANALYSIS] AT SER-155 AND SER-157</scope>
    <scope>IDENTIFICATION BY MASS SPECTROMETRY [LARGE SCALE ANALYSIS]</scope>
</reference>
<reference key="15">
    <citation type="journal article" date="2013" name="J. Biol. Chem.">
        <title>MiD49 and MiD51 can act independently of Mff and Fis1 in Drp1 recruitment and are specific for mitochondrial fission.</title>
        <authorList>
            <person name="Palmer C.S."/>
            <person name="Elgass K.D."/>
            <person name="Parton R.G."/>
            <person name="Osellame L.D."/>
            <person name="Stojanovski D."/>
            <person name="Ryan M.T."/>
        </authorList>
    </citation>
    <scope>SUBCELLULAR LOCATION</scope>
</reference>
<reference key="16">
    <citation type="journal article" date="2013" name="J. Proteome Res.">
        <title>Toward a comprehensive characterization of a human cancer cell phosphoproteome.</title>
        <authorList>
            <person name="Zhou H."/>
            <person name="Di Palma S."/>
            <person name="Preisinger C."/>
            <person name="Peng M."/>
            <person name="Polat A.N."/>
            <person name="Heck A.J."/>
            <person name="Mohammed S."/>
        </authorList>
    </citation>
    <scope>PHOSPHORYLATION [LARGE SCALE ANALYSIS] AT SER-157 AND SER-233</scope>
    <scope>IDENTIFICATION BY MASS SPECTROMETRY [LARGE SCALE ANALYSIS]</scope>
    <source>
        <tissue>Cervix carcinoma</tissue>
    </source>
</reference>
<reference key="17">
    <citation type="journal article" date="2013" name="Proc. Natl. Acad. Sci. U.S.A.">
        <title>Interchangeable adaptors regulate mitochondrial dynamin assembly for membrane scission.</title>
        <authorList>
            <person name="Koirala S."/>
            <person name="Guo Q."/>
            <person name="Kalia R."/>
            <person name="Bui H.T."/>
            <person name="Eckert D.M."/>
            <person name="Frost A."/>
            <person name="Shaw J.M."/>
        </authorList>
    </citation>
    <scope>FUNCTION</scope>
    <scope>SUBUNIT</scope>
</reference>
<reference key="18">
    <citation type="journal article" date="2014" name="J. Proteomics">
        <title>An enzyme assisted RP-RPLC approach for in-depth analysis of human liver phosphoproteome.</title>
        <authorList>
            <person name="Bian Y."/>
            <person name="Song C."/>
            <person name="Cheng K."/>
            <person name="Dong M."/>
            <person name="Wang F."/>
            <person name="Huang J."/>
            <person name="Sun D."/>
            <person name="Wang L."/>
            <person name="Ye M."/>
            <person name="Zou H."/>
        </authorList>
    </citation>
    <scope>PHOSPHORYLATION [LARGE SCALE ANALYSIS] AT SER-146 (ISOFORM 2)</scope>
    <scope>IDENTIFICATION BY MASS SPECTROMETRY [LARGE SCALE ANALYSIS]</scope>
    <source>
        <tissue>Liver</tissue>
    </source>
</reference>
<reference key="19">
    <citation type="journal article" date="2014" name="Mol. Biol. Cell">
        <title>Mutations in Fis1 disrupt orderly disposal of defective mitochondria.</title>
        <authorList>
            <person name="Shen Q."/>
            <person name="Yamano K."/>
            <person name="Head B.P."/>
            <person name="Kawajiri S."/>
            <person name="Cheung J.T."/>
            <person name="Wang C."/>
            <person name="Cho J.H."/>
            <person name="Hattori N."/>
            <person name="Youle R.J."/>
            <person name="van der Bliek A.M."/>
        </authorList>
    </citation>
    <scope>FUNCTION</scope>
    <scope>INTERACTION WITH DNM1L</scope>
</reference>
<reference key="20">
    <citation type="journal article" date="2015" name="Proteomics">
        <title>N-terminome analysis of the human mitochondrial proteome.</title>
        <authorList>
            <person name="Vaca Jacome A.S."/>
            <person name="Rabilloud T."/>
            <person name="Schaeffer-Reiss C."/>
            <person name="Rompais M."/>
            <person name="Ayoub D."/>
            <person name="Lane L."/>
            <person name="Bairoch A."/>
            <person name="Van Dorsselaer A."/>
            <person name="Carapito C."/>
        </authorList>
    </citation>
    <scope>IDENTIFICATION BY MASS SPECTROMETRY [LARGE SCALE ANALYSIS]</scope>
</reference>
<reference key="21">
    <citation type="journal article" date="2016" name="J. Med. Genet.">
        <title>Disturbed mitochondrial and peroxisomal dynamics due to loss of MFF causes Leigh-like encephalopathy, optic atrophy and peripheral neuropathy.</title>
        <authorList>
            <person name="Koch J."/>
            <person name="Feichtinger R.G."/>
            <person name="Freisinger P."/>
            <person name="Pies M."/>
            <person name="Schroedl F."/>
            <person name="Iuso A."/>
            <person name="Sperl W."/>
            <person name="Mayr J.A."/>
            <person name="Prokisch H."/>
            <person name="Haack T.B."/>
        </authorList>
    </citation>
    <scope>INVOLVEMENT IN EMPF2</scope>
</reference>
<reference key="22">
    <citation type="journal article" date="2006" name="Science">
        <title>The consensus coding sequences of human breast and colorectal cancers.</title>
        <authorList>
            <person name="Sjoeblom T."/>
            <person name="Jones S."/>
            <person name="Wood L.D."/>
            <person name="Parsons D.W."/>
            <person name="Lin J."/>
            <person name="Barber T.D."/>
            <person name="Mandelker D."/>
            <person name="Leary R.J."/>
            <person name="Ptak J."/>
            <person name="Silliman N."/>
            <person name="Szabo S."/>
            <person name="Buckhaults P."/>
            <person name="Farrell C."/>
            <person name="Meeh P."/>
            <person name="Markowitz S.D."/>
            <person name="Willis J."/>
            <person name="Dawson D."/>
            <person name="Willson J.K.V."/>
            <person name="Gazdar A.F."/>
            <person name="Hartigan J."/>
            <person name="Wu L."/>
            <person name="Liu C."/>
            <person name="Parmigiani G."/>
            <person name="Park B.H."/>
            <person name="Bachman K.E."/>
            <person name="Papadopoulos N."/>
            <person name="Vogelstein B."/>
            <person name="Kinzler K.W."/>
            <person name="Velculescu V.E."/>
        </authorList>
    </citation>
    <scope>VARIANT [LARGE SCALE ANALYSIS] LYS-29</scope>
</reference>
<sequence>MSKGTSSDTSLGRVSRAAFPSPTAAEMAEISRIQYEMEYTEGISQRMRVPEKLKVAPPNADLEQGFQEGVPNASVIMQVPERIVVAGNNEDVSFSRPADLDLIQSTPFKPLALKTPPRVLTLSERPLDFLDLERPPTTPQNEEIRAVGRLKRERSMSENAVRQNGQLVRNDSLWHRSDSAPRNKISRFQAPISAPEYTVTPSPQQARVCPPHMLPEDGANLSSARGILSLIQSSTRRAYQQILDVLDENRRPVLRGGSAAATSNPHHDNVRYGISNIDTTIEGTSDDLTVVDAASLRRQIIKLNRRLQLLEEENKERAKREMVMYSITVAFWLLNSWLWFRR</sequence>
<proteinExistence type="evidence at protein level"/>
<protein>
    <recommendedName>
        <fullName>Mitochondrial fission factor</fullName>
    </recommendedName>
</protein>
<name>MFF_HUMAN</name>
<gene>
    <name type="primary">MFF</name>
    <name type="synonym">C2orf33</name>
    <name type="ORF">AD030</name>
    <name type="ORF">AD033</name>
    <name type="ORF">GL004</name>
</gene>
<keyword id="KW-0025">Alternative splicing</keyword>
<keyword id="KW-0175">Coiled coil</keyword>
<keyword id="KW-0968">Cytoplasmic vesicle</keyword>
<keyword id="KW-0472">Membrane</keyword>
<keyword id="KW-0496">Mitochondrion</keyword>
<keyword id="KW-1000">Mitochondrion outer membrane</keyword>
<keyword id="KW-0576">Peroxisome</keyword>
<keyword id="KW-0597">Phosphoprotein</keyword>
<keyword id="KW-1267">Proteomics identification</keyword>
<keyword id="KW-1185">Reference proteome</keyword>
<keyword id="KW-0770">Synapse</keyword>
<keyword id="KW-0812">Transmembrane</keyword>
<keyword id="KW-1133">Transmembrane helix</keyword>
<evidence type="ECO:0000250" key="1">
    <source>
        <dbReference type="UniProtKB" id="Q4KM98"/>
    </source>
</evidence>
<evidence type="ECO:0000250" key="2">
    <source>
        <dbReference type="UniProtKB" id="Q6PCP5"/>
    </source>
</evidence>
<evidence type="ECO:0000255" key="3"/>
<evidence type="ECO:0000269" key="4">
    <source>
    </source>
</evidence>
<evidence type="ECO:0000269" key="5">
    <source>
    </source>
</evidence>
<evidence type="ECO:0000269" key="6">
    <source>
    </source>
</evidence>
<evidence type="ECO:0000269" key="7">
    <source>
    </source>
</evidence>
<evidence type="ECO:0000269" key="8">
    <source>
    </source>
</evidence>
<evidence type="ECO:0000269" key="9">
    <source>
    </source>
</evidence>
<evidence type="ECO:0000303" key="10">
    <source>
    </source>
</evidence>
<evidence type="ECO:0000303" key="11">
    <source>
    </source>
</evidence>
<evidence type="ECO:0000303" key="12">
    <source ref="3"/>
</evidence>
<evidence type="ECO:0000305" key="13"/>
<evidence type="ECO:0007744" key="14">
    <source>
    </source>
</evidence>
<evidence type="ECO:0007744" key="15">
    <source>
    </source>
</evidence>
<evidence type="ECO:0007744" key="16">
    <source>
    </source>
</evidence>
<evidence type="ECO:0007744" key="17">
    <source>
    </source>
</evidence>
<evidence type="ECO:0007744" key="18">
    <source>
    </source>
</evidence>
<evidence type="ECO:0007744" key="19">
    <source>
    </source>
</evidence>